<feature type="chain" id="PRO_1000100760" description="Probable nicotinate-nucleotide adenylyltransferase">
    <location>
        <begin position="1"/>
        <end position="190"/>
    </location>
</feature>
<protein>
    <recommendedName>
        <fullName evidence="1">Probable nicotinate-nucleotide adenylyltransferase</fullName>
        <ecNumber evidence="1">2.7.7.18</ecNumber>
    </recommendedName>
    <alternativeName>
        <fullName evidence="1">Deamido-NAD(+) diphosphorylase</fullName>
    </alternativeName>
    <alternativeName>
        <fullName evidence="1">Deamido-NAD(+) pyrophosphorylase</fullName>
    </alternativeName>
    <alternativeName>
        <fullName evidence="1">Nicotinate mononucleotide adenylyltransferase</fullName>
        <shortName evidence="1">NaMN adenylyltransferase</shortName>
    </alternativeName>
</protein>
<evidence type="ECO:0000255" key="1">
    <source>
        <dbReference type="HAMAP-Rule" id="MF_00244"/>
    </source>
</evidence>
<gene>
    <name evidence="1" type="primary">nadD</name>
    <name type="ordered locus">CFPG_403</name>
</gene>
<dbReference type="EC" id="2.7.7.18" evidence="1"/>
<dbReference type="EMBL" id="AP010656">
    <property type="protein sequence ID" value="BAG83666.1"/>
    <property type="molecule type" value="Genomic_DNA"/>
</dbReference>
<dbReference type="RefSeq" id="WP_012573427.1">
    <property type="nucleotide sequence ID" value="NC_011565.1"/>
</dbReference>
<dbReference type="SMR" id="B6YR44"/>
<dbReference type="STRING" id="511995.CFPG_403"/>
<dbReference type="KEGG" id="aps:CFPG_403"/>
<dbReference type="eggNOG" id="COG1057">
    <property type="taxonomic scope" value="Bacteria"/>
</dbReference>
<dbReference type="HOGENOM" id="CLU_069765_3_3_10"/>
<dbReference type="OrthoDB" id="5295945at2"/>
<dbReference type="UniPathway" id="UPA00253">
    <property type="reaction ID" value="UER00332"/>
</dbReference>
<dbReference type="Proteomes" id="UP000000723">
    <property type="component" value="Chromosome"/>
</dbReference>
<dbReference type="GO" id="GO:0005524">
    <property type="term" value="F:ATP binding"/>
    <property type="evidence" value="ECO:0007669"/>
    <property type="project" value="UniProtKB-KW"/>
</dbReference>
<dbReference type="GO" id="GO:0004515">
    <property type="term" value="F:nicotinate-nucleotide adenylyltransferase activity"/>
    <property type="evidence" value="ECO:0007669"/>
    <property type="project" value="UniProtKB-UniRule"/>
</dbReference>
<dbReference type="GO" id="GO:0009435">
    <property type="term" value="P:NAD biosynthetic process"/>
    <property type="evidence" value="ECO:0007669"/>
    <property type="project" value="UniProtKB-UniRule"/>
</dbReference>
<dbReference type="CDD" id="cd02165">
    <property type="entry name" value="NMNAT"/>
    <property type="match status" value="1"/>
</dbReference>
<dbReference type="Gene3D" id="3.40.50.620">
    <property type="entry name" value="HUPs"/>
    <property type="match status" value="1"/>
</dbReference>
<dbReference type="HAMAP" id="MF_00244">
    <property type="entry name" value="NaMN_adenylyltr"/>
    <property type="match status" value="1"/>
</dbReference>
<dbReference type="InterPro" id="IPR004821">
    <property type="entry name" value="Cyt_trans-like"/>
</dbReference>
<dbReference type="InterPro" id="IPR005248">
    <property type="entry name" value="NadD/NMNAT"/>
</dbReference>
<dbReference type="InterPro" id="IPR014729">
    <property type="entry name" value="Rossmann-like_a/b/a_fold"/>
</dbReference>
<dbReference type="NCBIfam" id="TIGR00482">
    <property type="entry name" value="nicotinate (nicotinamide) nucleotide adenylyltransferase"/>
    <property type="match status" value="1"/>
</dbReference>
<dbReference type="PANTHER" id="PTHR39321">
    <property type="entry name" value="NICOTINATE-NUCLEOTIDE ADENYLYLTRANSFERASE-RELATED"/>
    <property type="match status" value="1"/>
</dbReference>
<dbReference type="PANTHER" id="PTHR39321:SF3">
    <property type="entry name" value="PHOSPHOPANTETHEINE ADENYLYLTRANSFERASE"/>
    <property type="match status" value="1"/>
</dbReference>
<dbReference type="Pfam" id="PF01467">
    <property type="entry name" value="CTP_transf_like"/>
    <property type="match status" value="1"/>
</dbReference>
<dbReference type="SUPFAM" id="SSF52374">
    <property type="entry name" value="Nucleotidylyl transferase"/>
    <property type="match status" value="1"/>
</dbReference>
<reference key="1">
    <citation type="journal article" date="2008" name="Science">
        <title>Genome of an endosymbiont coupling N2 fixation to cellulolysis within RT protist cells in termite gut.</title>
        <authorList>
            <person name="Hongoh Y."/>
            <person name="Sharma V.K."/>
            <person name="Prakash T."/>
            <person name="Noda S."/>
            <person name="Toh H."/>
            <person name="Taylor T.D."/>
            <person name="Kudo T."/>
            <person name="Sakaki Y."/>
            <person name="Toyoda A."/>
            <person name="Hattori M."/>
            <person name="Ohkuma M."/>
        </authorList>
    </citation>
    <scope>NUCLEOTIDE SEQUENCE [LARGE SCALE GENOMIC DNA]</scope>
</reference>
<sequence length="190" mass="22647">MRIGILAGSFNPVHIGHLAIANYLAEYEGYDKIWFLITPQNPLKNEGELMNQNLRLRLLQKSIKDYNRFEICTIEWGMPRPSYTIDVLWKLHLDFPQNIFELIIGSDNWIIFHHWKDYRTILENFKILVYPRSNYKSIYFNHPNIYFCKDAPQIEISSAFIRKSIVEGKDIRFYMPEGVCREVVNNLFRP</sequence>
<keyword id="KW-0067">ATP-binding</keyword>
<keyword id="KW-0520">NAD</keyword>
<keyword id="KW-0547">Nucleotide-binding</keyword>
<keyword id="KW-0548">Nucleotidyltransferase</keyword>
<keyword id="KW-0662">Pyridine nucleotide biosynthesis</keyword>
<keyword id="KW-1185">Reference proteome</keyword>
<keyword id="KW-0808">Transferase</keyword>
<comment type="function">
    <text evidence="1">Catalyzes the reversible adenylation of nicotinate mononucleotide (NaMN) to nicotinic acid adenine dinucleotide (NaAD).</text>
</comment>
<comment type="catalytic activity">
    <reaction evidence="1">
        <text>nicotinate beta-D-ribonucleotide + ATP + H(+) = deamido-NAD(+) + diphosphate</text>
        <dbReference type="Rhea" id="RHEA:22860"/>
        <dbReference type="ChEBI" id="CHEBI:15378"/>
        <dbReference type="ChEBI" id="CHEBI:30616"/>
        <dbReference type="ChEBI" id="CHEBI:33019"/>
        <dbReference type="ChEBI" id="CHEBI:57502"/>
        <dbReference type="ChEBI" id="CHEBI:58437"/>
        <dbReference type="EC" id="2.7.7.18"/>
    </reaction>
</comment>
<comment type="pathway">
    <text evidence="1">Cofactor biosynthesis; NAD(+) biosynthesis; deamido-NAD(+) from nicotinate D-ribonucleotide: step 1/1.</text>
</comment>
<comment type="similarity">
    <text evidence="1">Belongs to the NadD family.</text>
</comment>
<organism>
    <name type="scientific">Azobacteroides pseudotrichonymphae genomovar. CFP2</name>
    <dbReference type="NCBI Taxonomy" id="511995"/>
    <lineage>
        <taxon>Bacteria</taxon>
        <taxon>Pseudomonadati</taxon>
        <taxon>Bacteroidota</taxon>
        <taxon>Bacteroidia</taxon>
        <taxon>Bacteroidales</taxon>
        <taxon>Candidatus Azobacteroides</taxon>
    </lineage>
</organism>
<accession>B6YR44</accession>
<name>NADD_AZOPC</name>
<proteinExistence type="inferred from homology"/>